<accession>B6IZD5</accession>
<sequence length="212" mass="23862">MTHSKRWLEEHEKDPYVKRAKKEGYPSRAAYKLLEIHQKYKLFKPSMNVIDLGAAPGGWSQVAKDLVGPKGVVIAIDLLPMQSMLDVIFIQGDFNEPEIFNQLEAIVAKKTLTGQVDLVISDMAPNISGIKNVDQSRSLHLVELAWDCAQKLLARGGTFLVKVFQGPGVDRFLINLRPYFNQVKFLKPSASRSRSSEIYILAGEFLGYNQRV</sequence>
<evidence type="ECO:0000255" key="1">
    <source>
        <dbReference type="HAMAP-Rule" id="MF_01547"/>
    </source>
</evidence>
<proteinExistence type="inferred from homology"/>
<gene>
    <name evidence="1" type="primary">rlmE</name>
    <name evidence="1" type="synonym">ftsJ</name>
    <name evidence="1" type="synonym">rrmJ</name>
    <name type="ordered locus">CbuG_0658</name>
</gene>
<keyword id="KW-0963">Cytoplasm</keyword>
<keyword id="KW-0489">Methyltransferase</keyword>
<keyword id="KW-0698">rRNA processing</keyword>
<keyword id="KW-0949">S-adenosyl-L-methionine</keyword>
<keyword id="KW-0808">Transferase</keyword>
<name>RLME_COXB2</name>
<reference key="1">
    <citation type="journal article" date="2009" name="Infect. Immun.">
        <title>Comparative genomics reveal extensive transposon-mediated genomic plasticity and diversity among potential effector proteins within the genus Coxiella.</title>
        <authorList>
            <person name="Beare P.A."/>
            <person name="Unsworth N."/>
            <person name="Andoh M."/>
            <person name="Voth D.E."/>
            <person name="Omsland A."/>
            <person name="Gilk S.D."/>
            <person name="Williams K.P."/>
            <person name="Sobral B.W."/>
            <person name="Kupko J.J. III"/>
            <person name="Porcella S.F."/>
            <person name="Samuel J.E."/>
            <person name="Heinzen R.A."/>
        </authorList>
    </citation>
    <scope>NUCLEOTIDE SEQUENCE [LARGE SCALE GENOMIC DNA]</scope>
    <source>
        <strain>CbuG_Q212</strain>
    </source>
</reference>
<comment type="function">
    <text evidence="1">Specifically methylates the uridine in position 2552 of 23S rRNA at the 2'-O position of the ribose in the fully assembled 50S ribosomal subunit.</text>
</comment>
<comment type="catalytic activity">
    <reaction evidence="1">
        <text>uridine(2552) in 23S rRNA + S-adenosyl-L-methionine = 2'-O-methyluridine(2552) in 23S rRNA + S-adenosyl-L-homocysteine + H(+)</text>
        <dbReference type="Rhea" id="RHEA:42720"/>
        <dbReference type="Rhea" id="RHEA-COMP:10202"/>
        <dbReference type="Rhea" id="RHEA-COMP:10203"/>
        <dbReference type="ChEBI" id="CHEBI:15378"/>
        <dbReference type="ChEBI" id="CHEBI:57856"/>
        <dbReference type="ChEBI" id="CHEBI:59789"/>
        <dbReference type="ChEBI" id="CHEBI:65315"/>
        <dbReference type="ChEBI" id="CHEBI:74478"/>
        <dbReference type="EC" id="2.1.1.166"/>
    </reaction>
</comment>
<comment type="subcellular location">
    <subcellularLocation>
        <location evidence="1">Cytoplasm</location>
    </subcellularLocation>
</comment>
<comment type="similarity">
    <text evidence="1">Belongs to the class I-like SAM-binding methyltransferase superfamily. RNA methyltransferase RlmE family.</text>
</comment>
<organism>
    <name type="scientific">Coxiella burnetii (strain CbuG_Q212)</name>
    <name type="common">Coxiella burnetii (strain Q212)</name>
    <dbReference type="NCBI Taxonomy" id="434923"/>
    <lineage>
        <taxon>Bacteria</taxon>
        <taxon>Pseudomonadati</taxon>
        <taxon>Pseudomonadota</taxon>
        <taxon>Gammaproteobacteria</taxon>
        <taxon>Legionellales</taxon>
        <taxon>Coxiellaceae</taxon>
        <taxon>Coxiella</taxon>
    </lineage>
</organism>
<feature type="chain" id="PRO_1000194985" description="Ribosomal RNA large subunit methyltransferase E">
    <location>
        <begin position="1"/>
        <end position="212"/>
    </location>
</feature>
<feature type="active site" description="Proton acceptor" evidence="1">
    <location>
        <position position="162"/>
    </location>
</feature>
<feature type="binding site" evidence="1">
    <location>
        <position position="57"/>
    </location>
    <ligand>
        <name>S-adenosyl-L-methionine</name>
        <dbReference type="ChEBI" id="CHEBI:59789"/>
    </ligand>
</feature>
<feature type="binding site" evidence="1">
    <location>
        <position position="59"/>
    </location>
    <ligand>
        <name>S-adenosyl-L-methionine</name>
        <dbReference type="ChEBI" id="CHEBI:59789"/>
    </ligand>
</feature>
<feature type="binding site" evidence="1">
    <location>
        <position position="77"/>
    </location>
    <ligand>
        <name>S-adenosyl-L-methionine</name>
        <dbReference type="ChEBI" id="CHEBI:59789"/>
    </ligand>
</feature>
<feature type="binding site" evidence="1">
    <location>
        <position position="93"/>
    </location>
    <ligand>
        <name>S-adenosyl-L-methionine</name>
        <dbReference type="ChEBI" id="CHEBI:59789"/>
    </ligand>
</feature>
<feature type="binding site" evidence="1">
    <location>
        <position position="122"/>
    </location>
    <ligand>
        <name>S-adenosyl-L-methionine</name>
        <dbReference type="ChEBI" id="CHEBI:59789"/>
    </ligand>
</feature>
<protein>
    <recommendedName>
        <fullName evidence="1">Ribosomal RNA large subunit methyltransferase E</fullName>
        <ecNumber evidence="1">2.1.1.166</ecNumber>
    </recommendedName>
    <alternativeName>
        <fullName evidence="1">23S rRNA Um2552 methyltransferase</fullName>
    </alternativeName>
    <alternativeName>
        <fullName evidence="1">rRNA (uridine-2'-O-)-methyltransferase</fullName>
    </alternativeName>
</protein>
<dbReference type="EC" id="2.1.1.166" evidence="1"/>
<dbReference type="EMBL" id="CP001019">
    <property type="protein sequence ID" value="ACJ18063.1"/>
    <property type="molecule type" value="Genomic_DNA"/>
</dbReference>
<dbReference type="RefSeq" id="WP_010958173.1">
    <property type="nucleotide sequence ID" value="NC_011527.1"/>
</dbReference>
<dbReference type="SMR" id="B6IZD5"/>
<dbReference type="KEGG" id="cbg:CbuG_0658"/>
<dbReference type="HOGENOM" id="CLU_009422_4_0_6"/>
<dbReference type="GO" id="GO:0005737">
    <property type="term" value="C:cytoplasm"/>
    <property type="evidence" value="ECO:0007669"/>
    <property type="project" value="UniProtKB-SubCell"/>
</dbReference>
<dbReference type="GO" id="GO:0008650">
    <property type="term" value="F:rRNA (uridine-2'-O-)-methyltransferase activity"/>
    <property type="evidence" value="ECO:0007669"/>
    <property type="project" value="UniProtKB-UniRule"/>
</dbReference>
<dbReference type="FunFam" id="3.40.50.150:FF:000005">
    <property type="entry name" value="Ribosomal RNA large subunit methyltransferase E"/>
    <property type="match status" value="1"/>
</dbReference>
<dbReference type="Gene3D" id="3.40.50.150">
    <property type="entry name" value="Vaccinia Virus protein VP39"/>
    <property type="match status" value="1"/>
</dbReference>
<dbReference type="HAMAP" id="MF_01547">
    <property type="entry name" value="RNA_methyltr_E"/>
    <property type="match status" value="1"/>
</dbReference>
<dbReference type="InterPro" id="IPR050082">
    <property type="entry name" value="RNA_methyltr_RlmE"/>
</dbReference>
<dbReference type="InterPro" id="IPR002877">
    <property type="entry name" value="RNA_MeTrfase_FtsJ_dom"/>
</dbReference>
<dbReference type="InterPro" id="IPR015507">
    <property type="entry name" value="rRNA-MeTfrase_E"/>
</dbReference>
<dbReference type="InterPro" id="IPR029063">
    <property type="entry name" value="SAM-dependent_MTases_sf"/>
</dbReference>
<dbReference type="PANTHER" id="PTHR10920">
    <property type="entry name" value="RIBOSOMAL RNA METHYLTRANSFERASE"/>
    <property type="match status" value="1"/>
</dbReference>
<dbReference type="PANTHER" id="PTHR10920:SF18">
    <property type="entry name" value="RRNA METHYLTRANSFERASE 2, MITOCHONDRIAL"/>
    <property type="match status" value="1"/>
</dbReference>
<dbReference type="Pfam" id="PF01728">
    <property type="entry name" value="FtsJ"/>
    <property type="match status" value="1"/>
</dbReference>
<dbReference type="PIRSF" id="PIRSF005461">
    <property type="entry name" value="23S_rRNA_mtase"/>
    <property type="match status" value="1"/>
</dbReference>
<dbReference type="SUPFAM" id="SSF53335">
    <property type="entry name" value="S-adenosyl-L-methionine-dependent methyltransferases"/>
    <property type="match status" value="1"/>
</dbReference>